<comment type="function">
    <text evidence="1">Core subunit of the mitochondrial membrane respiratory chain NADH dehydrogenase (Complex I) which catalyzes electron transfer from NADH through the respiratory chain, using ubiquinone as an electron acceptor. Essential for the catalytic activity and assembly of complex I.</text>
</comment>
<comment type="catalytic activity">
    <reaction evidence="1">
        <text>a ubiquinone + NADH + 5 H(+)(in) = a ubiquinol + NAD(+) + 4 H(+)(out)</text>
        <dbReference type="Rhea" id="RHEA:29091"/>
        <dbReference type="Rhea" id="RHEA-COMP:9565"/>
        <dbReference type="Rhea" id="RHEA-COMP:9566"/>
        <dbReference type="ChEBI" id="CHEBI:15378"/>
        <dbReference type="ChEBI" id="CHEBI:16389"/>
        <dbReference type="ChEBI" id="CHEBI:17976"/>
        <dbReference type="ChEBI" id="CHEBI:57540"/>
        <dbReference type="ChEBI" id="CHEBI:57945"/>
        <dbReference type="EC" id="7.1.1.2"/>
    </reaction>
</comment>
<comment type="subunit">
    <text evidence="1 2">Core subunit of respiratory chain NADH dehydrogenase (Complex I) which is composed of 45 different subunits. Interacts with TMEM242 (By similarity).</text>
</comment>
<comment type="subcellular location">
    <subcellularLocation>
        <location evidence="2">Mitochondrion inner membrane</location>
        <topology evidence="3">Multi-pass membrane protein</topology>
    </subcellularLocation>
</comment>
<comment type="similarity">
    <text evidence="4">Belongs to the complex I subunit 2 family.</text>
</comment>
<geneLocation type="mitochondrion"/>
<evidence type="ECO:0000250" key="1">
    <source>
        <dbReference type="UniProtKB" id="P03891"/>
    </source>
</evidence>
<evidence type="ECO:0000250" key="2">
    <source>
        <dbReference type="UniProtKB" id="P03892"/>
    </source>
</evidence>
<evidence type="ECO:0000255" key="3"/>
<evidence type="ECO:0000305" key="4"/>
<accession>Q00540</accession>
<accession>Q08H18</accession>
<gene>
    <name evidence="1" type="primary">MT-ND2</name>
    <name type="synonym">MTND2</name>
    <name type="synonym">NADH2</name>
    <name type="synonym">ND2</name>
</gene>
<protein>
    <recommendedName>
        <fullName evidence="1">NADH-ubiquinone oxidoreductase chain 2</fullName>
        <ecNumber evidence="1">7.1.1.2</ecNumber>
    </recommendedName>
    <alternativeName>
        <fullName>NADH dehydrogenase subunit 2</fullName>
    </alternativeName>
</protein>
<feature type="chain" id="PRO_0000117624" description="NADH-ubiquinone oxidoreductase chain 2">
    <location>
        <begin position="1"/>
        <end position="347"/>
    </location>
</feature>
<feature type="transmembrane region" description="Helical" evidence="3">
    <location>
        <begin position="3"/>
        <end position="23"/>
    </location>
</feature>
<feature type="transmembrane region" description="Helical" evidence="3">
    <location>
        <begin position="25"/>
        <end position="45"/>
    </location>
</feature>
<feature type="transmembrane region" description="Helical" evidence="3">
    <location>
        <begin position="60"/>
        <end position="80"/>
    </location>
</feature>
<feature type="transmembrane region" description="Helical" evidence="3">
    <location>
        <begin position="96"/>
        <end position="116"/>
    </location>
</feature>
<feature type="transmembrane region" description="Helical" evidence="3">
    <location>
        <begin position="122"/>
        <end position="142"/>
    </location>
</feature>
<feature type="transmembrane region" description="Helical" evidence="3">
    <location>
        <begin position="153"/>
        <end position="173"/>
    </location>
</feature>
<feature type="transmembrane region" description="Helical" evidence="3">
    <location>
        <begin position="178"/>
        <end position="198"/>
    </location>
</feature>
<feature type="transmembrane region" description="Helical" evidence="3">
    <location>
        <begin position="200"/>
        <end position="220"/>
    </location>
</feature>
<feature type="transmembrane region" description="Helical" evidence="3">
    <location>
        <begin position="237"/>
        <end position="257"/>
    </location>
</feature>
<feature type="transmembrane region" description="Helical" evidence="3">
    <location>
        <begin position="274"/>
        <end position="294"/>
    </location>
</feature>
<feature type="transmembrane region" description="Helical" evidence="3">
    <location>
        <begin position="323"/>
        <end position="343"/>
    </location>
</feature>
<reference key="1">
    <citation type="journal article" date="1992" name="J. Mol. Evol.">
        <title>The complete mitochondrial DNA sequence of the harbor seal, Phoca vitulina.</title>
        <authorList>
            <person name="Arnason U."/>
            <person name="Johnsson E."/>
        </authorList>
    </citation>
    <scope>NUCLEOTIDE SEQUENCE [GENOMIC DNA]</scope>
</reference>
<reference key="2">
    <citation type="journal article" date="2006" name="Mol. Phylogenet. Evol.">
        <title>Pinniped phylogeny and a new hypothesis for their origin and dispersal.</title>
        <authorList>
            <person name="Arnason U."/>
            <person name="Gullberg A."/>
            <person name="Janke A."/>
            <person name="Kullberg M."/>
            <person name="Lehman N."/>
            <person name="Petrov E.A."/>
            <person name="Vainola R."/>
        </authorList>
    </citation>
    <scope>NUCLEOTIDE SEQUENCE [GENOMIC DNA]</scope>
</reference>
<dbReference type="EC" id="7.1.1.2" evidence="1"/>
<dbReference type="EMBL" id="X63726">
    <property type="protein sequence ID" value="CAA45258.1"/>
    <property type="molecule type" value="Genomic_DNA"/>
</dbReference>
<dbReference type="EMBL" id="AM181032">
    <property type="protein sequence ID" value="CAJ57080.1"/>
    <property type="molecule type" value="Genomic_DNA"/>
</dbReference>
<dbReference type="PIR" id="S26152">
    <property type="entry name" value="S26152"/>
</dbReference>
<dbReference type="RefSeq" id="NP_006929.1">
    <property type="nucleotide sequence ID" value="NC_001325.1"/>
</dbReference>
<dbReference type="SMR" id="Q00540"/>
<dbReference type="GeneID" id="807659"/>
<dbReference type="CTD" id="4536"/>
<dbReference type="OrthoDB" id="28314at33554"/>
<dbReference type="GO" id="GO:0005743">
    <property type="term" value="C:mitochondrial inner membrane"/>
    <property type="evidence" value="ECO:0000250"/>
    <property type="project" value="UniProtKB"/>
</dbReference>
<dbReference type="GO" id="GO:0008137">
    <property type="term" value="F:NADH dehydrogenase (ubiquinone) activity"/>
    <property type="evidence" value="ECO:0007669"/>
    <property type="project" value="UniProtKB-EC"/>
</dbReference>
<dbReference type="GO" id="GO:0006120">
    <property type="term" value="P:mitochondrial electron transport, NADH to ubiquinone"/>
    <property type="evidence" value="ECO:0007669"/>
    <property type="project" value="InterPro"/>
</dbReference>
<dbReference type="InterPro" id="IPR050175">
    <property type="entry name" value="Complex_I_Subunit_2"/>
</dbReference>
<dbReference type="InterPro" id="IPR010933">
    <property type="entry name" value="NADH_DH_su2_C"/>
</dbReference>
<dbReference type="InterPro" id="IPR003917">
    <property type="entry name" value="NADH_UbQ_OxRdtase_chain2"/>
</dbReference>
<dbReference type="InterPro" id="IPR001750">
    <property type="entry name" value="ND/Mrp_TM"/>
</dbReference>
<dbReference type="PANTHER" id="PTHR46552">
    <property type="entry name" value="NADH-UBIQUINONE OXIDOREDUCTASE CHAIN 2"/>
    <property type="match status" value="1"/>
</dbReference>
<dbReference type="PANTHER" id="PTHR46552:SF1">
    <property type="entry name" value="NADH-UBIQUINONE OXIDOREDUCTASE CHAIN 2"/>
    <property type="match status" value="1"/>
</dbReference>
<dbReference type="Pfam" id="PF06444">
    <property type="entry name" value="NADH_dehy_S2_C"/>
    <property type="match status" value="1"/>
</dbReference>
<dbReference type="Pfam" id="PF00361">
    <property type="entry name" value="Proton_antipo_M"/>
    <property type="match status" value="1"/>
</dbReference>
<dbReference type="PRINTS" id="PR01436">
    <property type="entry name" value="NADHDHGNASE2"/>
</dbReference>
<sequence>MKPPILIIIMSTVMSGTMIVLTSSHWLLTWIGFEMNMLAIIPILMKNHTPRATEASTKYFLTQATASMLLMMGIIINLMFSGEWTISKIPNPIASGLVTIALTMKLGMAPFHFWVPEVTQGISLSSGMILLTWQKIAPLSVLYQISPSINPKLLITMAIASVLIGGWGGLNQTQLRKILAYSSIAHMGWMTVILTYNPTLMVLNLTIYITMTLSTFMLFMHNSSTTTLSLSNTWNKLPLMTSLILMLMMSLGGLPPLSGFAPKWMIIQELTKNDMIILPTFMAITALLNLYFYMRLSYSTALTMFPSVNNMKMKWQFESAKKIILLPPLIIISTMLLPMTPMMSILE</sequence>
<keyword id="KW-0249">Electron transport</keyword>
<keyword id="KW-0472">Membrane</keyword>
<keyword id="KW-0496">Mitochondrion</keyword>
<keyword id="KW-0999">Mitochondrion inner membrane</keyword>
<keyword id="KW-0520">NAD</keyword>
<keyword id="KW-0679">Respiratory chain</keyword>
<keyword id="KW-1278">Translocase</keyword>
<keyword id="KW-0812">Transmembrane</keyword>
<keyword id="KW-1133">Transmembrane helix</keyword>
<keyword id="KW-0813">Transport</keyword>
<keyword id="KW-0830">Ubiquinone</keyword>
<proteinExistence type="inferred from homology"/>
<organism>
    <name type="scientific">Phoca vitulina</name>
    <name type="common">Harbor seal</name>
    <dbReference type="NCBI Taxonomy" id="9720"/>
    <lineage>
        <taxon>Eukaryota</taxon>
        <taxon>Metazoa</taxon>
        <taxon>Chordata</taxon>
        <taxon>Craniata</taxon>
        <taxon>Vertebrata</taxon>
        <taxon>Euteleostomi</taxon>
        <taxon>Mammalia</taxon>
        <taxon>Eutheria</taxon>
        <taxon>Laurasiatheria</taxon>
        <taxon>Carnivora</taxon>
        <taxon>Caniformia</taxon>
        <taxon>Pinnipedia</taxon>
        <taxon>Phocidae</taxon>
        <taxon>Phocinae</taxon>
        <taxon>Phoca</taxon>
    </lineage>
</organism>
<name>NU2M_PHOVI</name>